<comment type="function">
    <text evidence="1">NDH-1 shuttles electrons from NADH, via FMN and iron-sulfur (Fe-S) centers, to quinones in the respiratory chain. The immediate electron acceptor for the enzyme in this species is believed to be ubiquinone. Couples the redox reaction to proton translocation (for every two electrons transferred, four hydrogen ions are translocated across the cytoplasmic membrane), and thus conserves the redox energy in a proton gradient.</text>
</comment>
<comment type="catalytic activity">
    <reaction evidence="1">
        <text>a quinone + NADH + 5 H(+)(in) = a quinol + NAD(+) + 4 H(+)(out)</text>
        <dbReference type="Rhea" id="RHEA:57888"/>
        <dbReference type="ChEBI" id="CHEBI:15378"/>
        <dbReference type="ChEBI" id="CHEBI:24646"/>
        <dbReference type="ChEBI" id="CHEBI:57540"/>
        <dbReference type="ChEBI" id="CHEBI:57945"/>
        <dbReference type="ChEBI" id="CHEBI:132124"/>
    </reaction>
</comment>
<comment type="subunit">
    <text evidence="1">NDH-1 is composed of 14 different subunits. Subunits NuoA, H, J, K, L, M, N constitute the membrane sector of the complex.</text>
</comment>
<comment type="subcellular location">
    <subcellularLocation>
        <location evidence="1">Cell membrane</location>
        <topology evidence="1">Multi-pass membrane protein</topology>
    </subcellularLocation>
</comment>
<comment type="similarity">
    <text evidence="1">Belongs to the complex I subunit 4L family.</text>
</comment>
<protein>
    <recommendedName>
        <fullName evidence="1">NADH-quinone oxidoreductase subunit K</fullName>
        <ecNumber evidence="1">7.1.1.-</ecNumber>
    </recommendedName>
    <alternativeName>
        <fullName evidence="1">NADH dehydrogenase I subunit K</fullName>
    </alternativeName>
    <alternativeName>
        <fullName evidence="1">NDH-1 subunit K</fullName>
    </alternativeName>
</protein>
<organism>
    <name type="scientific">Chloroflexus aurantiacus (strain ATCC 29366 / DSM 635 / J-10-fl)</name>
    <dbReference type="NCBI Taxonomy" id="324602"/>
    <lineage>
        <taxon>Bacteria</taxon>
        <taxon>Bacillati</taxon>
        <taxon>Chloroflexota</taxon>
        <taxon>Chloroflexia</taxon>
        <taxon>Chloroflexales</taxon>
        <taxon>Chloroflexineae</taxon>
        <taxon>Chloroflexaceae</taxon>
        <taxon>Chloroflexus</taxon>
    </lineage>
</organism>
<keyword id="KW-1003">Cell membrane</keyword>
<keyword id="KW-0472">Membrane</keyword>
<keyword id="KW-0520">NAD</keyword>
<keyword id="KW-0874">Quinone</keyword>
<keyword id="KW-1185">Reference proteome</keyword>
<keyword id="KW-1278">Translocase</keyword>
<keyword id="KW-0812">Transmembrane</keyword>
<keyword id="KW-1133">Transmembrane helix</keyword>
<keyword id="KW-0813">Transport</keyword>
<keyword id="KW-0830">Ubiquinone</keyword>
<reference key="1">
    <citation type="journal article" date="2011" name="BMC Genomics">
        <title>Complete genome sequence of the filamentous anoxygenic phototrophic bacterium Chloroflexus aurantiacus.</title>
        <authorList>
            <person name="Tang K.H."/>
            <person name="Barry K."/>
            <person name="Chertkov O."/>
            <person name="Dalin E."/>
            <person name="Han C.S."/>
            <person name="Hauser L.J."/>
            <person name="Honchak B.M."/>
            <person name="Karbach L.E."/>
            <person name="Land M.L."/>
            <person name="Lapidus A."/>
            <person name="Larimer F.W."/>
            <person name="Mikhailova N."/>
            <person name="Pitluck S."/>
            <person name="Pierson B.K."/>
            <person name="Blankenship R.E."/>
        </authorList>
    </citation>
    <scope>NUCLEOTIDE SEQUENCE [LARGE SCALE GENOMIC DNA]</scope>
    <source>
        <strain>ATCC 29366 / DSM 635 / J-10-fl</strain>
    </source>
</reference>
<dbReference type="EC" id="7.1.1.-" evidence="1"/>
<dbReference type="EMBL" id="CP000909">
    <property type="protein sequence ID" value="ABY36105.1"/>
    <property type="molecule type" value="Genomic_DNA"/>
</dbReference>
<dbReference type="RefSeq" id="WP_012258758.1">
    <property type="nucleotide sequence ID" value="NC_010175.1"/>
</dbReference>
<dbReference type="RefSeq" id="YP_001636494.1">
    <property type="nucleotide sequence ID" value="NC_010175.1"/>
</dbReference>
<dbReference type="SMR" id="A9WFC1"/>
<dbReference type="STRING" id="324602.Caur_2906"/>
<dbReference type="EnsemblBacteria" id="ABY36105">
    <property type="protein sequence ID" value="ABY36105"/>
    <property type="gene ID" value="Caur_2906"/>
</dbReference>
<dbReference type="KEGG" id="cau:Caur_2906"/>
<dbReference type="PATRIC" id="fig|324602.8.peg.3272"/>
<dbReference type="eggNOG" id="COG0713">
    <property type="taxonomic scope" value="Bacteria"/>
</dbReference>
<dbReference type="HOGENOM" id="CLU_144724_0_0_0"/>
<dbReference type="InParanoid" id="A9WFC1"/>
<dbReference type="Proteomes" id="UP000002008">
    <property type="component" value="Chromosome"/>
</dbReference>
<dbReference type="GO" id="GO:0030964">
    <property type="term" value="C:NADH dehydrogenase complex"/>
    <property type="evidence" value="ECO:0000318"/>
    <property type="project" value="GO_Central"/>
</dbReference>
<dbReference type="GO" id="GO:0005886">
    <property type="term" value="C:plasma membrane"/>
    <property type="evidence" value="ECO:0007669"/>
    <property type="project" value="UniProtKB-SubCell"/>
</dbReference>
<dbReference type="GO" id="GO:0050136">
    <property type="term" value="F:NADH:ubiquinone reductase (non-electrogenic) activity"/>
    <property type="evidence" value="ECO:0007669"/>
    <property type="project" value="UniProtKB-UniRule"/>
</dbReference>
<dbReference type="GO" id="GO:0048038">
    <property type="term" value="F:quinone binding"/>
    <property type="evidence" value="ECO:0007669"/>
    <property type="project" value="UniProtKB-KW"/>
</dbReference>
<dbReference type="GO" id="GO:0042773">
    <property type="term" value="P:ATP synthesis coupled electron transport"/>
    <property type="evidence" value="ECO:0007669"/>
    <property type="project" value="InterPro"/>
</dbReference>
<dbReference type="FunFam" id="1.10.287.3510:FF:000001">
    <property type="entry name" value="NADH-quinone oxidoreductase subunit K"/>
    <property type="match status" value="1"/>
</dbReference>
<dbReference type="Gene3D" id="1.10.287.3510">
    <property type="match status" value="1"/>
</dbReference>
<dbReference type="HAMAP" id="MF_01456">
    <property type="entry name" value="NDH1_NuoK"/>
    <property type="match status" value="1"/>
</dbReference>
<dbReference type="InterPro" id="IPR001133">
    <property type="entry name" value="NADH_UbQ_OxRdtase_chain4L/K"/>
</dbReference>
<dbReference type="InterPro" id="IPR039428">
    <property type="entry name" value="NUOK/Mnh_C1-like"/>
</dbReference>
<dbReference type="NCBIfam" id="NF004320">
    <property type="entry name" value="PRK05715.1-2"/>
    <property type="match status" value="1"/>
</dbReference>
<dbReference type="NCBIfam" id="NF004321">
    <property type="entry name" value="PRK05715.1-3"/>
    <property type="match status" value="1"/>
</dbReference>
<dbReference type="PANTHER" id="PTHR11434:SF21">
    <property type="entry name" value="NADH DEHYDROGENASE SUBUNIT 4L-RELATED"/>
    <property type="match status" value="1"/>
</dbReference>
<dbReference type="PANTHER" id="PTHR11434">
    <property type="entry name" value="NADH-UBIQUINONE OXIDOREDUCTASE SUBUNIT ND4L"/>
    <property type="match status" value="1"/>
</dbReference>
<dbReference type="Pfam" id="PF00420">
    <property type="entry name" value="Oxidored_q2"/>
    <property type="match status" value="1"/>
</dbReference>
<name>NUOK_CHLAA</name>
<sequence>MVPTSYYVLLSAILFTIGVLGVLLRRNAIVVFMAVELMLNAANLALVAFARERLGVEAQVIVFFVITVAAAEVAVGLALLVSIFRTKRTADVDEVSTLKG</sequence>
<accession>A9WFC1</accession>
<feature type="chain" id="PRO_0000390013" description="NADH-quinone oxidoreductase subunit K">
    <location>
        <begin position="1"/>
        <end position="100"/>
    </location>
</feature>
<feature type="transmembrane region" description="Helical" evidence="1">
    <location>
        <begin position="4"/>
        <end position="24"/>
    </location>
</feature>
<feature type="transmembrane region" description="Helical" evidence="1">
    <location>
        <begin position="29"/>
        <end position="49"/>
    </location>
</feature>
<feature type="transmembrane region" description="Helical" evidence="1">
    <location>
        <begin position="60"/>
        <end position="80"/>
    </location>
</feature>
<gene>
    <name evidence="1" type="primary">nuoK</name>
    <name type="ordered locus">Caur_2906</name>
</gene>
<evidence type="ECO:0000255" key="1">
    <source>
        <dbReference type="HAMAP-Rule" id="MF_01456"/>
    </source>
</evidence>
<proteinExistence type="inferred from homology"/>